<reference key="1">
    <citation type="journal article" date="1995" name="J. Bacteriol.">
        <title>Identification and sequence analysis of lpfABCDE, a putative fimbrial operon of Salmonella typhimurium.</title>
        <authorList>
            <person name="Baeumler A.J."/>
            <person name="Heffron F."/>
        </authorList>
    </citation>
    <scope>NUCLEOTIDE SEQUENCE [GENOMIC DNA]</scope>
    <source>
        <strain>ATCC 14028 / SGSG 2980 / CDC 6516-60 / NCTC 12023</strain>
    </source>
</reference>
<reference key="2">
    <citation type="journal article" date="2001" name="Nature">
        <title>Complete genome sequence of Salmonella enterica serovar Typhimurium LT2.</title>
        <authorList>
            <person name="McClelland M."/>
            <person name="Sanderson K.E."/>
            <person name="Spieth J."/>
            <person name="Clifton S.W."/>
            <person name="Latreille P."/>
            <person name="Courtney L."/>
            <person name="Porwollik S."/>
            <person name="Ali J."/>
            <person name="Dante M."/>
            <person name="Du F."/>
            <person name="Hou S."/>
            <person name="Layman D."/>
            <person name="Leonard S."/>
            <person name="Nguyen C."/>
            <person name="Scott K."/>
            <person name="Holmes A."/>
            <person name="Grewal N."/>
            <person name="Mulvaney E."/>
            <person name="Ryan E."/>
            <person name="Sun H."/>
            <person name="Florea L."/>
            <person name="Miller W."/>
            <person name="Stoneking T."/>
            <person name="Nhan M."/>
            <person name="Waterston R."/>
            <person name="Wilson R.K."/>
        </authorList>
    </citation>
    <scope>NUCLEOTIDE SEQUENCE [LARGE SCALE GENOMIC DNA]</scope>
    <source>
        <strain>LT2 / SGSC1412 / ATCC 700720</strain>
    </source>
</reference>
<evidence type="ECO:0000255" key="1"/>
<evidence type="ECO:0000305" key="2"/>
<sequence>MLKKLIMFTGLLGGSVLFSGQALAAADFGPCTPEGGTHIFSATINKTVSDTSKNTTGATFVDFDSWNLGGTYAMSCECPDDTSLINDTLFKAVVPLAFVTNIESRSYYQINNNIAIASDVLISGGRGEYVNTPFENVGNLTNNRSQCSQNASSKDAIWTSGGKGHLSLYILHPFVGESIIPSTKIMDLFVTKKPSVYGSIPASSVYISGSITVPQGCELSSGSTLEIPFGEFKATDFKDRKGQVAKNATKFTKELQFKCTNISDGVKIFLRIEGMPNANDSNAIDMGNPDIGAVIEGANGKILVPNDASVNQELSVSGLVDDTHRTASTTISAYPISTTGKLPAAGDFEGIATMRIDVE</sequence>
<protein>
    <recommendedName>
        <fullName>Protein LpfD</fullName>
    </recommendedName>
</protein>
<feature type="signal peptide" evidence="1">
    <location>
        <begin position="1"/>
        <end position="24"/>
    </location>
</feature>
<feature type="chain" id="PRO_0000009214" description="Protein LpfD">
    <location>
        <begin position="25"/>
        <end position="359"/>
    </location>
</feature>
<feature type="sequence conflict" description="In Ref. 1; AAA73969." evidence="2" ref="1">
    <original>S</original>
    <variation>T</variation>
    <location>
        <position position="118"/>
    </location>
</feature>
<feature type="sequence conflict" description="In Ref. 1; AAA73969." evidence="2" ref="1">
    <original>GRGEYVNTPFENVG</original>
    <variation>DEENTLTHRS</variation>
    <location>
        <begin position="125"/>
        <end position="138"/>
    </location>
</feature>
<organism>
    <name type="scientific">Salmonella typhimurium (strain LT2 / SGSC1412 / ATCC 700720)</name>
    <dbReference type="NCBI Taxonomy" id="99287"/>
    <lineage>
        <taxon>Bacteria</taxon>
        <taxon>Pseudomonadati</taxon>
        <taxon>Pseudomonadota</taxon>
        <taxon>Gammaproteobacteria</taxon>
        <taxon>Enterobacterales</taxon>
        <taxon>Enterobacteriaceae</taxon>
        <taxon>Salmonella</taxon>
    </lineage>
</organism>
<accession>P43663</accession>
<dbReference type="EMBL" id="U18559">
    <property type="protein sequence ID" value="AAA73969.1"/>
    <property type="molecule type" value="Genomic_DNA"/>
</dbReference>
<dbReference type="EMBL" id="AE006468">
    <property type="protein sequence ID" value="AAL22497.1"/>
    <property type="molecule type" value="Genomic_DNA"/>
</dbReference>
<dbReference type="PIR" id="D56271">
    <property type="entry name" value="D56271"/>
</dbReference>
<dbReference type="RefSeq" id="NP_462538.1">
    <property type="nucleotide sequence ID" value="NC_003197.2"/>
</dbReference>
<dbReference type="RefSeq" id="WP_000914255.1">
    <property type="nucleotide sequence ID" value="NC_003197.2"/>
</dbReference>
<dbReference type="SMR" id="P43663"/>
<dbReference type="STRING" id="99287.STM3637"/>
<dbReference type="PaxDb" id="99287-STM3637"/>
<dbReference type="GeneID" id="1255161"/>
<dbReference type="KEGG" id="stm:STM3637"/>
<dbReference type="PATRIC" id="fig|99287.12.peg.3846"/>
<dbReference type="HOGENOM" id="CLU_066608_0_0_6"/>
<dbReference type="PhylomeDB" id="P43663"/>
<dbReference type="BioCyc" id="SENT99287:STM3637-MONOMER"/>
<dbReference type="Proteomes" id="UP000001014">
    <property type="component" value="Chromosome"/>
</dbReference>
<dbReference type="GO" id="GO:0009289">
    <property type="term" value="C:pilus"/>
    <property type="evidence" value="ECO:0000318"/>
    <property type="project" value="GO_Central"/>
</dbReference>
<dbReference type="GO" id="GO:0043709">
    <property type="term" value="P:cell adhesion involved in single-species biofilm formation"/>
    <property type="evidence" value="ECO:0000318"/>
    <property type="project" value="GO_Central"/>
</dbReference>
<dbReference type="Gene3D" id="2.60.40.1090">
    <property type="entry name" value="Fimbrial-type adhesion domain"/>
    <property type="match status" value="1"/>
</dbReference>
<dbReference type="InterPro" id="IPR000259">
    <property type="entry name" value="Adhesion_dom_fimbrial"/>
</dbReference>
<dbReference type="InterPro" id="IPR036937">
    <property type="entry name" value="Adhesion_dom_fimbrial_sf"/>
</dbReference>
<dbReference type="InterPro" id="IPR008966">
    <property type="entry name" value="Adhesion_dom_sf"/>
</dbReference>
<dbReference type="InterPro" id="IPR050263">
    <property type="entry name" value="Bact_Fimbrial_Adh_Pro"/>
</dbReference>
<dbReference type="NCBIfam" id="NF011753">
    <property type="entry name" value="PRK15206.1"/>
    <property type="match status" value="1"/>
</dbReference>
<dbReference type="PANTHER" id="PTHR33420">
    <property type="entry name" value="FIMBRIAL SUBUNIT ELFA-RELATED"/>
    <property type="match status" value="1"/>
</dbReference>
<dbReference type="PANTHER" id="PTHR33420:SF31">
    <property type="entry name" value="TYPE 1 FIMBRIN D-MANNOSE SPECIFIC ADHESIN"/>
    <property type="match status" value="1"/>
</dbReference>
<dbReference type="Pfam" id="PF00419">
    <property type="entry name" value="Fimbrial"/>
    <property type="match status" value="1"/>
</dbReference>
<dbReference type="SUPFAM" id="SSF49401">
    <property type="entry name" value="Bacterial adhesins"/>
    <property type="match status" value="1"/>
</dbReference>
<keyword id="KW-0281">Fimbrium</keyword>
<keyword id="KW-1185">Reference proteome</keyword>
<keyword id="KW-0732">Signal</keyword>
<proteinExistence type="inferred from homology"/>
<name>LPFD_SALTY</name>
<gene>
    <name type="primary">lpfD</name>
    <name type="ordered locus">STM3637</name>
</gene>
<comment type="subcellular location">
    <subcellularLocation>
        <location evidence="2">Fimbrium</location>
    </subcellularLocation>
</comment>
<comment type="similarity">
    <text evidence="2">Belongs to the fimbrial protein family.</text>
</comment>